<comment type="function">
    <text evidence="4">May be a transcriptional repressor.</text>
</comment>
<comment type="interaction">
    <interactant intactId="EBI-10223330">
        <id>Q03923-3</id>
    </interactant>
    <interactant intactId="EBI-742887">
        <id>Q8TAP6</id>
        <label>CEP76</label>
    </interactant>
    <organismsDiffer>false</organismsDiffer>
    <experiments>3</experiments>
</comment>
<comment type="subcellular location">
    <subcellularLocation>
        <location evidence="4">Nucleus</location>
    </subcellularLocation>
</comment>
<comment type="alternative products">
    <event type="alternative splicing"/>
    <isoform>
        <id>Q03923-1</id>
        <name>1</name>
        <sequence type="displayed"/>
    </isoform>
    <isoform>
        <id>Q03923-2</id>
        <name>2</name>
        <sequence type="described" ref="VSP_035771"/>
    </isoform>
    <isoform>
        <id>Q03923-3</id>
        <name>3</name>
        <sequence type="described" ref="VSP_042154 VSP_042155"/>
    </isoform>
</comment>
<comment type="tissue specificity">
    <text evidence="3 4">Widely expressed, including in testis.</text>
</comment>
<comment type="similarity">
    <text evidence="7">Belongs to the krueppel C2H2-type zinc-finger protein family.</text>
</comment>
<accession>Q03923</accession>
<accession>B9ZVP4</accession>
<accession>Q6NVI0</accession>
<organism>
    <name type="scientific">Homo sapiens</name>
    <name type="common">Human</name>
    <dbReference type="NCBI Taxonomy" id="9606"/>
    <lineage>
        <taxon>Eukaryota</taxon>
        <taxon>Metazoa</taxon>
        <taxon>Chordata</taxon>
        <taxon>Craniata</taxon>
        <taxon>Vertebrata</taxon>
        <taxon>Euteleostomi</taxon>
        <taxon>Mammalia</taxon>
        <taxon>Eutheria</taxon>
        <taxon>Euarchontoglires</taxon>
        <taxon>Primates</taxon>
        <taxon>Haplorrhini</taxon>
        <taxon>Catarrhini</taxon>
        <taxon>Hominidae</taxon>
        <taxon>Homo</taxon>
    </lineage>
</organism>
<gene>
    <name type="primary">ZNF85</name>
</gene>
<feature type="chain" id="PRO_0000047398" description="Zinc finger protein 85">
    <location>
        <begin position="1"/>
        <end position="595"/>
    </location>
</feature>
<feature type="domain" description="KRAB" evidence="2">
    <location>
        <begin position="4"/>
        <end position="75"/>
    </location>
</feature>
<feature type="zinc finger region" description="C2H2-type 1; degenerate" evidence="1">
    <location>
        <begin position="146"/>
        <end position="168"/>
    </location>
</feature>
<feature type="zinc finger region" description="C2H2-type 2" evidence="1">
    <location>
        <begin position="174"/>
        <end position="196"/>
    </location>
</feature>
<feature type="zinc finger region" description="C2H2-type 3" evidence="1">
    <location>
        <begin position="202"/>
        <end position="224"/>
    </location>
</feature>
<feature type="zinc finger region" description="C2H2-type 4" evidence="1">
    <location>
        <begin position="230"/>
        <end position="252"/>
    </location>
</feature>
<feature type="zinc finger region" description="C2H2-type 5" evidence="1">
    <location>
        <begin position="258"/>
        <end position="280"/>
    </location>
</feature>
<feature type="zinc finger region" description="C2H2-type 6" evidence="1">
    <location>
        <begin position="286"/>
        <end position="308"/>
    </location>
</feature>
<feature type="zinc finger region" description="C2H2-type 7" evidence="1">
    <location>
        <begin position="314"/>
        <end position="336"/>
    </location>
</feature>
<feature type="zinc finger region" description="C2H2-type 8" evidence="1">
    <location>
        <begin position="342"/>
        <end position="364"/>
    </location>
</feature>
<feature type="zinc finger region" description="C2H2-type 9" evidence="1">
    <location>
        <begin position="370"/>
        <end position="392"/>
    </location>
</feature>
<feature type="zinc finger region" description="C2H2-type 10" evidence="1">
    <location>
        <begin position="398"/>
        <end position="420"/>
    </location>
</feature>
<feature type="zinc finger region" description="C2H2-type 11; degenerate" evidence="1">
    <location>
        <begin position="426"/>
        <end position="448"/>
    </location>
</feature>
<feature type="zinc finger region" description="C2H2-type 12" evidence="1">
    <location>
        <begin position="454"/>
        <end position="476"/>
    </location>
</feature>
<feature type="zinc finger region" description="C2H2-type 13" evidence="1">
    <location>
        <begin position="482"/>
        <end position="504"/>
    </location>
</feature>
<feature type="zinc finger region" description="C2H2-type 14" evidence="1">
    <location>
        <begin position="510"/>
        <end position="532"/>
    </location>
</feature>
<feature type="zinc finger region" description="C2H2-type 15" evidence="1">
    <location>
        <begin position="538"/>
        <end position="560"/>
    </location>
</feature>
<feature type="zinc finger region" description="C2H2-type 16" evidence="1">
    <location>
        <begin position="566"/>
        <end position="588"/>
    </location>
</feature>
<feature type="splice variant" id="VSP_035771" description="In isoform 2." evidence="6">
    <location>
        <begin position="44"/>
        <end position="76"/>
    </location>
</feature>
<feature type="splice variant" id="VSP_042154" description="In isoform 3." evidence="5">
    <original>VMCSHFAQDLW</original>
    <variation>ESYSVTQSGMQ</variation>
    <location>
        <begin position="77"/>
        <end position="87"/>
    </location>
</feature>
<feature type="splice variant" id="VSP_042155" description="In isoform 3." evidence="5">
    <location>
        <begin position="88"/>
        <end position="595"/>
    </location>
</feature>
<feature type="sequence variant" id="VAR_033552" description="In dbSNP:rs7254311.">
    <original>K</original>
    <variation>T</variation>
    <location>
        <position position="60"/>
    </location>
</feature>
<feature type="sequence variant" id="VAR_061932" description="In dbSNP:rs56321708." evidence="3 4">
    <original>Q</original>
    <variation>R</variation>
    <location>
        <position position="84"/>
    </location>
</feature>
<feature type="sequence variant" id="VAR_061933" description="In dbSNP:rs56231962." evidence="3">
    <original>R</original>
    <variation>I</variation>
    <location>
        <position position="115"/>
    </location>
</feature>
<feature type="sequence variant" id="VAR_061934" description="In dbSNP:rs56393308." evidence="3">
    <original>T</original>
    <variation>R</variation>
    <location>
        <position position="177"/>
    </location>
</feature>
<feature type="sequence variant" id="VAR_033553" description="In dbSNP:rs11665978." evidence="3">
    <original>G</original>
    <variation>R</variation>
    <location>
        <position position="184"/>
    </location>
</feature>
<feature type="sequence variant" id="VAR_047515" description="In dbSNP:rs1063156." evidence="4">
    <original>T</original>
    <variation>A</variation>
    <location>
        <position position="266"/>
    </location>
</feature>
<feature type="sequence variant" id="VAR_033554" description="In dbSNP:rs11670246.">
    <original>F</original>
    <variation>S</variation>
    <location>
        <position position="270"/>
    </location>
</feature>
<feature type="sequence conflict" description="In Ref. 1; AAA79179." evidence="7" ref="1">
    <original>C</original>
    <variation>S</variation>
    <location>
        <position position="428"/>
    </location>
</feature>
<proteinExistence type="evidence at protein level"/>
<reference key="1">
    <citation type="journal article" date="1998" name="DNA Cell Biol.">
        <title>Functional analysis of ZNF85 KRAB zinc finger protein, a member of the highly homologous ZNF91 family.</title>
        <authorList>
            <person name="Poncelet D.A."/>
            <person name="Bellefroid E.J."/>
            <person name="Bastiaens P.V."/>
            <person name="Demoitie M.A."/>
            <person name="Marine J.C."/>
            <person name="Pendeville H."/>
            <person name="Alami Y."/>
            <person name="Devos N."/>
            <person name="Lecocq P.J."/>
            <person name="Ogawa T."/>
            <person name="Muller M."/>
            <person name="Martial J.A."/>
        </authorList>
    </citation>
    <scope>NUCLEOTIDE SEQUENCE [MRNA] (ISOFORM 1)</scope>
    <scope>FUNCTION</scope>
    <scope>SUBCELLULAR LOCATION</scope>
    <scope>TISSUE SPECIFICITY</scope>
    <scope>VARIANTS ARG-84 AND ALA-266</scope>
    <source>
        <tissue>Placenta</tissue>
    </source>
</reference>
<reference key="2">
    <citation type="journal article" date="2004" name="Nature">
        <title>The DNA sequence and biology of human chromosome 19.</title>
        <authorList>
            <person name="Grimwood J."/>
            <person name="Gordon L.A."/>
            <person name="Olsen A.S."/>
            <person name="Terry A."/>
            <person name="Schmutz J."/>
            <person name="Lamerdin J.E."/>
            <person name="Hellsten U."/>
            <person name="Goodstein D."/>
            <person name="Couronne O."/>
            <person name="Tran-Gyamfi M."/>
            <person name="Aerts A."/>
            <person name="Altherr M."/>
            <person name="Ashworth L."/>
            <person name="Bajorek E."/>
            <person name="Black S."/>
            <person name="Branscomb E."/>
            <person name="Caenepeel S."/>
            <person name="Carrano A.V."/>
            <person name="Caoile C."/>
            <person name="Chan Y.M."/>
            <person name="Christensen M."/>
            <person name="Cleland C.A."/>
            <person name="Copeland A."/>
            <person name="Dalin E."/>
            <person name="Dehal P."/>
            <person name="Denys M."/>
            <person name="Detter J.C."/>
            <person name="Escobar J."/>
            <person name="Flowers D."/>
            <person name="Fotopulos D."/>
            <person name="Garcia C."/>
            <person name="Georgescu A.M."/>
            <person name="Glavina T."/>
            <person name="Gomez M."/>
            <person name="Gonzales E."/>
            <person name="Groza M."/>
            <person name="Hammon N."/>
            <person name="Hawkins T."/>
            <person name="Haydu L."/>
            <person name="Ho I."/>
            <person name="Huang W."/>
            <person name="Israni S."/>
            <person name="Jett J."/>
            <person name="Kadner K."/>
            <person name="Kimball H."/>
            <person name="Kobayashi A."/>
            <person name="Larionov V."/>
            <person name="Leem S.-H."/>
            <person name="Lopez F."/>
            <person name="Lou Y."/>
            <person name="Lowry S."/>
            <person name="Malfatti S."/>
            <person name="Martinez D."/>
            <person name="McCready P.M."/>
            <person name="Medina C."/>
            <person name="Morgan J."/>
            <person name="Nelson K."/>
            <person name="Nolan M."/>
            <person name="Ovcharenko I."/>
            <person name="Pitluck S."/>
            <person name="Pollard M."/>
            <person name="Popkie A.P."/>
            <person name="Predki P."/>
            <person name="Quan G."/>
            <person name="Ramirez L."/>
            <person name="Rash S."/>
            <person name="Retterer J."/>
            <person name="Rodriguez A."/>
            <person name="Rogers S."/>
            <person name="Salamov A."/>
            <person name="Salazar A."/>
            <person name="She X."/>
            <person name="Smith D."/>
            <person name="Slezak T."/>
            <person name="Solovyev V."/>
            <person name="Thayer N."/>
            <person name="Tice H."/>
            <person name="Tsai M."/>
            <person name="Ustaszewska A."/>
            <person name="Vo N."/>
            <person name="Wagner M."/>
            <person name="Wheeler J."/>
            <person name="Wu K."/>
            <person name="Xie G."/>
            <person name="Yang J."/>
            <person name="Dubchak I."/>
            <person name="Furey T.S."/>
            <person name="DeJong P."/>
            <person name="Dickson M."/>
            <person name="Gordon D."/>
            <person name="Eichler E.E."/>
            <person name="Pennacchio L.A."/>
            <person name="Richardson P."/>
            <person name="Stubbs L."/>
            <person name="Rokhsar D.S."/>
            <person name="Myers R.M."/>
            <person name="Rubin E.M."/>
            <person name="Lucas S.M."/>
        </authorList>
    </citation>
    <scope>NUCLEOTIDE SEQUENCE [LARGE SCALE GENOMIC DNA]</scope>
</reference>
<reference key="3">
    <citation type="journal article" date="2004" name="Genome Res.">
        <title>The status, quality, and expansion of the NIH full-length cDNA project: the Mammalian Gene Collection (MGC).</title>
        <authorList>
            <consortium name="The MGC Project Team"/>
        </authorList>
    </citation>
    <scope>NUCLEOTIDE SEQUENCE [LARGE SCALE MRNA] (ISOFORM 3)</scope>
    <source>
        <tissue>Lung</tissue>
    </source>
</reference>
<reference key="4">
    <citation type="journal article" date="1991" name="Proc. Natl. Acad. Sci. U.S.A.">
        <title>The evolutionarily conserved Kruppel-associated box domain defines a subfamily of eukaryotic multifingered proteins.</title>
        <authorList>
            <person name="Bellefroid E.J."/>
            <person name="Poncelet D.A."/>
            <person name="Lecocq P.J."/>
            <person name="Revelant O."/>
            <person name="Martial J.A."/>
        </authorList>
    </citation>
    <scope>NUCLEOTIDE SEQUENCE [MRNA] OF 1-196 (ISOFORM 1)</scope>
    <scope>NUCLEOTIDE SEQUENCE [MRNA] OF 12-196 (ISOFORM 2)</scope>
    <scope>VARIANTS ARG-84; ILE-115; ARG-177 AND ARG-184</scope>
    <scope>TISSUE SPECIFICITY</scope>
</reference>
<protein>
    <recommendedName>
        <fullName>Zinc finger protein 85</fullName>
    </recommendedName>
    <alternativeName>
        <fullName>Zinc finger protein HPF4</fullName>
    </alternativeName>
    <alternativeName>
        <fullName>Zinc finger protein HTF1</fullName>
    </alternativeName>
</protein>
<keyword id="KW-0025">Alternative splicing</keyword>
<keyword id="KW-0238">DNA-binding</keyword>
<keyword id="KW-0479">Metal-binding</keyword>
<keyword id="KW-0539">Nucleus</keyword>
<keyword id="KW-1267">Proteomics identification</keyword>
<keyword id="KW-1185">Reference proteome</keyword>
<keyword id="KW-0677">Repeat</keyword>
<keyword id="KW-0678">Repressor</keyword>
<keyword id="KW-0804">Transcription</keyword>
<keyword id="KW-0805">Transcription regulation</keyword>
<keyword id="KW-0862">Zinc</keyword>
<keyword id="KW-0863">Zinc-finger</keyword>
<evidence type="ECO:0000255" key="1">
    <source>
        <dbReference type="PROSITE-ProRule" id="PRU00042"/>
    </source>
</evidence>
<evidence type="ECO:0000255" key="2">
    <source>
        <dbReference type="PROSITE-ProRule" id="PRU00119"/>
    </source>
</evidence>
<evidence type="ECO:0000269" key="3">
    <source>
    </source>
</evidence>
<evidence type="ECO:0000269" key="4">
    <source>
    </source>
</evidence>
<evidence type="ECO:0000303" key="5">
    <source>
    </source>
</evidence>
<evidence type="ECO:0000303" key="6">
    <source>
    </source>
</evidence>
<evidence type="ECO:0000305" key="7"/>
<dbReference type="EMBL" id="U35376">
    <property type="protein sequence ID" value="AAA79179.1"/>
    <property type="molecule type" value="mRNA"/>
</dbReference>
<dbReference type="EMBL" id="AC008739">
    <property type="status" value="NOT_ANNOTATED_CDS"/>
    <property type="molecule type" value="Genomic_DNA"/>
</dbReference>
<dbReference type="EMBL" id="BC068066">
    <property type="protein sequence ID" value="AAH68066.1"/>
    <property type="molecule type" value="mRNA"/>
</dbReference>
<dbReference type="EMBL" id="M61866">
    <property type="protein sequence ID" value="AAA52689.1"/>
    <property type="molecule type" value="mRNA"/>
</dbReference>
<dbReference type="EMBL" id="M61868">
    <property type="protein sequence ID" value="AAA58671.1"/>
    <property type="molecule type" value="mRNA"/>
</dbReference>
<dbReference type="CCDS" id="CCDS32977.1">
    <molecule id="Q03923-1"/>
</dbReference>
<dbReference type="CCDS" id="CCDS58657.1">
    <molecule id="Q03923-3"/>
</dbReference>
<dbReference type="PIR" id="A39384">
    <property type="entry name" value="A39384"/>
</dbReference>
<dbReference type="PIR" id="C39384">
    <property type="entry name" value="C39384"/>
</dbReference>
<dbReference type="PIR" id="G02075">
    <property type="entry name" value="G02075"/>
</dbReference>
<dbReference type="RefSeq" id="NP_001243101.1">
    <molecule id="Q03923-3"/>
    <property type="nucleotide sequence ID" value="NM_001256172.2"/>
</dbReference>
<dbReference type="RefSeq" id="NP_003420.2">
    <molecule id="Q03923-1"/>
    <property type="nucleotide sequence ID" value="NM_003429.5"/>
</dbReference>
<dbReference type="SMR" id="Q03923"/>
<dbReference type="BioGRID" id="113455">
    <property type="interactions" value="8"/>
</dbReference>
<dbReference type="FunCoup" id="Q03923">
    <property type="interactions" value="1031"/>
</dbReference>
<dbReference type="IntAct" id="Q03923">
    <property type="interactions" value="2"/>
</dbReference>
<dbReference type="STRING" id="9606.ENSP00000329793"/>
<dbReference type="iPTMnet" id="Q03923"/>
<dbReference type="PhosphoSitePlus" id="Q03923"/>
<dbReference type="BioMuta" id="ZNF85"/>
<dbReference type="DMDM" id="215274175"/>
<dbReference type="jPOST" id="Q03923"/>
<dbReference type="MassIVE" id="Q03923"/>
<dbReference type="PaxDb" id="9606-ENSP00000329793"/>
<dbReference type="PeptideAtlas" id="Q03923"/>
<dbReference type="Antibodypedia" id="28656">
    <property type="antibodies" value="107 antibodies from 12 providers"/>
</dbReference>
<dbReference type="DNASU" id="7639"/>
<dbReference type="Ensembl" id="ENST00000300540.7">
    <molecule id="Q03923-3"/>
    <property type="protein sequence ID" value="ENSP00000300540.2"/>
    <property type="gene ID" value="ENSG00000105750.15"/>
</dbReference>
<dbReference type="Ensembl" id="ENST00000328178.13">
    <molecule id="Q03923-1"/>
    <property type="protein sequence ID" value="ENSP00000329793.7"/>
    <property type="gene ID" value="ENSG00000105750.15"/>
</dbReference>
<dbReference type="Ensembl" id="ENST00000345030.6">
    <molecule id="Q03923-2"/>
    <property type="protein sequence ID" value="ENSP00000342340.5"/>
    <property type="gene ID" value="ENSG00000105750.15"/>
</dbReference>
<dbReference type="Ensembl" id="ENST00000613159.2">
    <molecule id="Q03923-2"/>
    <property type="protein sequence ID" value="ENSP00000479316.2"/>
    <property type="gene ID" value="ENSG00000278091.4"/>
</dbReference>
<dbReference type="Ensembl" id="ENST00000615320.4">
    <molecule id="Q03923-1"/>
    <property type="protein sequence ID" value="ENSP00000483118.1"/>
    <property type="gene ID" value="ENSG00000278091.4"/>
</dbReference>
<dbReference type="Ensembl" id="ENST00000615882.4">
    <molecule id="Q03923-3"/>
    <property type="protein sequence ID" value="ENSP00000479120.1"/>
    <property type="gene ID" value="ENSG00000278091.4"/>
</dbReference>
<dbReference type="GeneID" id="7639"/>
<dbReference type="KEGG" id="hsa:7639"/>
<dbReference type="MANE-Select" id="ENST00000328178.13">
    <property type="protein sequence ID" value="ENSP00000329793.7"/>
    <property type="RefSeq nucleotide sequence ID" value="NM_003429.5"/>
    <property type="RefSeq protein sequence ID" value="NP_003420.2"/>
</dbReference>
<dbReference type="UCSC" id="uc002npf.5">
    <molecule id="Q03923-1"/>
    <property type="organism name" value="human"/>
</dbReference>
<dbReference type="AGR" id="HGNC:13160"/>
<dbReference type="CTD" id="7639"/>
<dbReference type="DisGeNET" id="7639"/>
<dbReference type="GeneCards" id="ZNF85"/>
<dbReference type="HGNC" id="HGNC:13160">
    <property type="gene designation" value="ZNF85"/>
</dbReference>
<dbReference type="HPA" id="ENSG00000105750">
    <property type="expression patterns" value="Low tissue specificity"/>
</dbReference>
<dbReference type="MIM" id="603899">
    <property type="type" value="gene"/>
</dbReference>
<dbReference type="neXtProt" id="NX_Q03923"/>
<dbReference type="OpenTargets" id="ENSG00000105750"/>
<dbReference type="PharmGKB" id="PA37733"/>
<dbReference type="VEuPathDB" id="HostDB:ENSG00000105750"/>
<dbReference type="eggNOG" id="KOG1721">
    <property type="taxonomic scope" value="Eukaryota"/>
</dbReference>
<dbReference type="GeneTree" id="ENSGT00940000154251"/>
<dbReference type="HOGENOM" id="CLU_002678_69_11_1"/>
<dbReference type="InParanoid" id="Q03923"/>
<dbReference type="OMA" id="EHKEIHT"/>
<dbReference type="OrthoDB" id="9537077at2759"/>
<dbReference type="PAN-GO" id="Q03923">
    <property type="GO annotations" value="3 GO annotations based on evolutionary models"/>
</dbReference>
<dbReference type="PhylomeDB" id="Q03923"/>
<dbReference type="TreeFam" id="TF342117"/>
<dbReference type="PathwayCommons" id="Q03923"/>
<dbReference type="SignaLink" id="Q03923"/>
<dbReference type="BioGRID-ORCS" id="7639">
    <property type="hits" value="91 hits in 1145 CRISPR screens"/>
</dbReference>
<dbReference type="ChiTaRS" id="ZNF85">
    <property type="organism name" value="human"/>
</dbReference>
<dbReference type="GenomeRNAi" id="7639"/>
<dbReference type="Pharos" id="Q03923">
    <property type="development level" value="Tbio"/>
</dbReference>
<dbReference type="PRO" id="PR:Q03923"/>
<dbReference type="Proteomes" id="UP000005640">
    <property type="component" value="Chromosome 19"/>
</dbReference>
<dbReference type="RNAct" id="Q03923">
    <property type="molecule type" value="protein"/>
</dbReference>
<dbReference type="Bgee" id="ENSG00000105750">
    <property type="expression patterns" value="Expressed in primordial germ cell in gonad and 106 other cell types or tissues"/>
</dbReference>
<dbReference type="ExpressionAtlas" id="Q03923">
    <property type="expression patterns" value="baseline and differential"/>
</dbReference>
<dbReference type="GO" id="GO:0005654">
    <property type="term" value="C:nucleoplasm"/>
    <property type="evidence" value="ECO:0000314"/>
    <property type="project" value="HPA"/>
</dbReference>
<dbReference type="GO" id="GO:0005634">
    <property type="term" value="C:nucleus"/>
    <property type="evidence" value="ECO:0000314"/>
    <property type="project" value="GO_Central"/>
</dbReference>
<dbReference type="GO" id="GO:0000981">
    <property type="term" value="F:DNA-binding transcription factor activity, RNA polymerase II-specific"/>
    <property type="evidence" value="ECO:0000318"/>
    <property type="project" value="GO_Central"/>
</dbReference>
<dbReference type="GO" id="GO:0001227">
    <property type="term" value="F:DNA-binding transcription repressor activity, RNA polymerase II-specific"/>
    <property type="evidence" value="ECO:0000314"/>
    <property type="project" value="GO_Central"/>
</dbReference>
<dbReference type="GO" id="GO:0000978">
    <property type="term" value="F:RNA polymerase II cis-regulatory region sequence-specific DNA binding"/>
    <property type="evidence" value="ECO:0000314"/>
    <property type="project" value="GO_Central"/>
</dbReference>
<dbReference type="GO" id="GO:0008270">
    <property type="term" value="F:zinc ion binding"/>
    <property type="evidence" value="ECO:0007669"/>
    <property type="project" value="UniProtKB-KW"/>
</dbReference>
<dbReference type="GO" id="GO:0006355">
    <property type="term" value="P:regulation of DNA-templated transcription"/>
    <property type="evidence" value="ECO:0000318"/>
    <property type="project" value="GO_Central"/>
</dbReference>
<dbReference type="CDD" id="cd07765">
    <property type="entry name" value="KRAB_A-box"/>
    <property type="match status" value="1"/>
</dbReference>
<dbReference type="FunFam" id="3.30.160.60:FF:001737">
    <property type="entry name" value="Zinc finger protein 100"/>
    <property type="match status" value="2"/>
</dbReference>
<dbReference type="FunFam" id="3.30.160.60:FF:000374">
    <property type="entry name" value="Zinc finger protein 208"/>
    <property type="match status" value="1"/>
</dbReference>
<dbReference type="FunFam" id="3.30.160.60:FF:000034">
    <property type="entry name" value="zinc finger protein 25"/>
    <property type="match status" value="1"/>
</dbReference>
<dbReference type="FunFam" id="3.30.160.60:FF:001868">
    <property type="entry name" value="Zinc finger protein 264"/>
    <property type="match status" value="2"/>
</dbReference>
<dbReference type="FunFam" id="3.30.160.60:FF:000690">
    <property type="entry name" value="Zinc finger protein 354C"/>
    <property type="match status" value="1"/>
</dbReference>
<dbReference type="FunFam" id="3.30.160.60:FF:000120">
    <property type="entry name" value="Zinc finger protein 430"/>
    <property type="match status" value="4"/>
</dbReference>
<dbReference type="FunFam" id="3.30.160.60:FF:000362">
    <property type="entry name" value="Zinc finger protein 606"/>
    <property type="match status" value="2"/>
</dbReference>
<dbReference type="FunFam" id="3.30.160.60:FF:002297">
    <property type="entry name" value="Zinc finger protein 85"/>
    <property type="match status" value="1"/>
</dbReference>
<dbReference type="FunFam" id="3.30.160.60:FF:000307">
    <property type="entry name" value="Zinc finger protein ZFP69 isoform 1"/>
    <property type="match status" value="1"/>
</dbReference>
<dbReference type="Gene3D" id="6.10.140.140">
    <property type="match status" value="1"/>
</dbReference>
<dbReference type="Gene3D" id="3.30.160.60">
    <property type="entry name" value="Classic Zinc Finger"/>
    <property type="match status" value="15"/>
</dbReference>
<dbReference type="InterPro" id="IPR050752">
    <property type="entry name" value="C2H2-ZF_domain"/>
</dbReference>
<dbReference type="InterPro" id="IPR001909">
    <property type="entry name" value="KRAB"/>
</dbReference>
<dbReference type="InterPro" id="IPR036051">
    <property type="entry name" value="KRAB_dom_sf"/>
</dbReference>
<dbReference type="InterPro" id="IPR036236">
    <property type="entry name" value="Znf_C2H2_sf"/>
</dbReference>
<dbReference type="InterPro" id="IPR013087">
    <property type="entry name" value="Znf_C2H2_type"/>
</dbReference>
<dbReference type="PANTHER" id="PTHR24384">
    <property type="entry name" value="FINGER PUTATIVE TRANSCRIPTION FACTOR FAMILY-RELATED"/>
    <property type="match status" value="1"/>
</dbReference>
<dbReference type="PANTHER" id="PTHR24384:SF211">
    <property type="entry name" value="ZINC FINGER PROTEIN 138-RELATED"/>
    <property type="match status" value="1"/>
</dbReference>
<dbReference type="Pfam" id="PF01352">
    <property type="entry name" value="KRAB"/>
    <property type="match status" value="1"/>
</dbReference>
<dbReference type="Pfam" id="PF00096">
    <property type="entry name" value="zf-C2H2"/>
    <property type="match status" value="15"/>
</dbReference>
<dbReference type="SMART" id="SM00349">
    <property type="entry name" value="KRAB"/>
    <property type="match status" value="1"/>
</dbReference>
<dbReference type="SMART" id="SM00355">
    <property type="entry name" value="ZnF_C2H2"/>
    <property type="match status" value="15"/>
</dbReference>
<dbReference type="SUPFAM" id="SSF57667">
    <property type="entry name" value="beta-beta-alpha zinc fingers"/>
    <property type="match status" value="9"/>
</dbReference>
<dbReference type="SUPFAM" id="SSF109640">
    <property type="entry name" value="KRAB domain (Kruppel-associated box)"/>
    <property type="match status" value="1"/>
</dbReference>
<dbReference type="PROSITE" id="PS50805">
    <property type="entry name" value="KRAB"/>
    <property type="match status" value="1"/>
</dbReference>
<dbReference type="PROSITE" id="PS00028">
    <property type="entry name" value="ZINC_FINGER_C2H2_1"/>
    <property type="match status" value="15"/>
</dbReference>
<dbReference type="PROSITE" id="PS50157">
    <property type="entry name" value="ZINC_FINGER_C2H2_2"/>
    <property type="match status" value="15"/>
</dbReference>
<sequence length="595" mass="68736">MGPLTFRDVAIEFSLKEWQCLDTAQRNLYRNVMLENYRNLVFLGITVSKPDLITCLEQGKEAWSMKRHEIMVAKPTVMCSHFAQDLWPEQNIKDSFQKVTLKRYGKCRHENLPLRKGCESMDECKMHKGGCNGLNQCLTATQSKIFQCDKYVKVAHKFSNSNRHEIRHTKKKPFKCTKCGKSFGMISCLTEHSRIHTRVNFYKCEECGKAFNWSSTLTKHKRIHTGEKPYKCEECGKAFNQSSNLIKHKKIHTGEKPYKCEECGKTFNRFSTLTTHKIIHTGEKPYKCKECGKAFNRSSTLTTHRKIHTGEKPYKCEECGKAFKQSSNLTTHKIIHTGEKPYKCKKCGKAFNQSAHLTTHEVIHTGEKPYKCEKCGKAFNHFSHLTTHKIIHTGEKPYKCKECGKAFKHSSTLTKHKIIHTGEKPYKCKECEKAFNQSSKLTEHKKIHTGEKPYECEKCGKAFNQSSNLTRHKKSHTEEKPYKCEECGKGFKWPSTLTIHKIIHTGEKPYKCEECGKAFNQSSKLTKHKKIHTGEKPYTCEECGKAFNQSSNLTKHKRIHTGEKPYKCEECDKAFKWSSVLTKHKIIHTGEKLQI</sequence>
<name>ZNF85_HUMAN</name>